<dbReference type="EMBL" id="AC005309">
    <property type="protein sequence ID" value="AAC63654.2"/>
    <property type="molecule type" value="Genomic_DNA"/>
</dbReference>
<dbReference type="EMBL" id="CP002685">
    <property type="protein sequence ID" value="AEC10888.1"/>
    <property type="molecule type" value="Genomic_DNA"/>
</dbReference>
<dbReference type="EMBL" id="AF424569">
    <property type="protein sequence ID" value="AAL11563.1"/>
    <property type="molecule type" value="mRNA"/>
</dbReference>
<dbReference type="EMBL" id="BT000571">
    <property type="protein sequence ID" value="AAN18140.1"/>
    <property type="molecule type" value="mRNA"/>
</dbReference>
<dbReference type="PIR" id="E84919">
    <property type="entry name" value="E84919"/>
</dbReference>
<dbReference type="RefSeq" id="NP_566111.1">
    <property type="nucleotide sequence ID" value="NM_130346.4"/>
</dbReference>
<dbReference type="SMR" id="Q944S2"/>
<dbReference type="FunCoup" id="Q944S2">
    <property type="interactions" value="3429"/>
</dbReference>
<dbReference type="STRING" id="3702.Q944S2"/>
<dbReference type="iPTMnet" id="Q944S2"/>
<dbReference type="PaxDb" id="3702-AT2G47790.1"/>
<dbReference type="ProteomicsDB" id="247235"/>
<dbReference type="EnsemblPlants" id="AT2G47790.1">
    <property type="protein sequence ID" value="AT2G47790.1"/>
    <property type="gene ID" value="AT2G47790"/>
</dbReference>
<dbReference type="GeneID" id="819391"/>
<dbReference type="Gramene" id="AT2G47790.1">
    <property type="protein sequence ID" value="AT2G47790.1"/>
    <property type="gene ID" value="AT2G47790"/>
</dbReference>
<dbReference type="KEGG" id="ath:AT2G47790"/>
<dbReference type="Araport" id="AT2G47790"/>
<dbReference type="TAIR" id="AT2G47790">
    <property type="gene designation" value="GTS1"/>
</dbReference>
<dbReference type="eggNOG" id="KOG1188">
    <property type="taxonomic scope" value="Eukaryota"/>
</dbReference>
<dbReference type="HOGENOM" id="CLU_037323_4_2_1"/>
<dbReference type="InParanoid" id="Q944S2"/>
<dbReference type="OMA" id="YHEKTDK"/>
<dbReference type="PhylomeDB" id="Q944S2"/>
<dbReference type="PRO" id="PR:Q944S2"/>
<dbReference type="Proteomes" id="UP000006548">
    <property type="component" value="Chromosome 2"/>
</dbReference>
<dbReference type="ExpressionAtlas" id="Q944S2">
    <property type="expression patterns" value="baseline and differential"/>
</dbReference>
<dbReference type="GO" id="GO:0040008">
    <property type="term" value="P:regulation of growth"/>
    <property type="evidence" value="ECO:0000315"/>
    <property type="project" value="TAIR"/>
</dbReference>
<dbReference type="GO" id="GO:0010029">
    <property type="term" value="P:regulation of seed germination"/>
    <property type="evidence" value="ECO:0000315"/>
    <property type="project" value="TAIR"/>
</dbReference>
<dbReference type="FunFam" id="2.130.10.10:FF:003032">
    <property type="entry name" value="WD repeat-containing protein GTS1"/>
    <property type="match status" value="1"/>
</dbReference>
<dbReference type="Gene3D" id="2.130.10.10">
    <property type="entry name" value="YVTN repeat-like/Quinoprotein amine dehydrogenase"/>
    <property type="match status" value="2"/>
</dbReference>
<dbReference type="InterPro" id="IPR015943">
    <property type="entry name" value="WD40/YVTN_repeat-like_dom_sf"/>
</dbReference>
<dbReference type="InterPro" id="IPR036322">
    <property type="entry name" value="WD40_repeat_dom_sf"/>
</dbReference>
<dbReference type="InterPro" id="IPR001680">
    <property type="entry name" value="WD40_rpt"/>
</dbReference>
<dbReference type="InterPro" id="IPR039328">
    <property type="entry name" value="WDR89"/>
</dbReference>
<dbReference type="PANTHER" id="PTHR22889">
    <property type="entry name" value="WD REPEAT-CONTAINING PROTEIN 89"/>
    <property type="match status" value="1"/>
</dbReference>
<dbReference type="PANTHER" id="PTHR22889:SF0">
    <property type="entry name" value="WD REPEAT-CONTAINING PROTEIN 89"/>
    <property type="match status" value="1"/>
</dbReference>
<dbReference type="Pfam" id="PF00400">
    <property type="entry name" value="WD40"/>
    <property type="match status" value="2"/>
</dbReference>
<dbReference type="SMART" id="SM00320">
    <property type="entry name" value="WD40"/>
    <property type="match status" value="4"/>
</dbReference>
<dbReference type="SUPFAM" id="SSF50978">
    <property type="entry name" value="WD40 repeat-like"/>
    <property type="match status" value="1"/>
</dbReference>
<dbReference type="PROSITE" id="PS50082">
    <property type="entry name" value="WD_REPEATS_2"/>
    <property type="match status" value="1"/>
</dbReference>
<dbReference type="PROSITE" id="PS50294">
    <property type="entry name" value="WD_REPEATS_REGION"/>
    <property type="match status" value="1"/>
</dbReference>
<feature type="chain" id="PRO_0000443284" description="WD repeat-containing protein GTS1">
    <location>
        <begin position="1"/>
        <end position="392"/>
    </location>
</feature>
<feature type="repeat" description="WD 1" evidence="1">
    <location>
        <begin position="81"/>
        <end position="124"/>
    </location>
</feature>
<feature type="repeat" description="WD 2" evidence="1">
    <location>
        <begin position="128"/>
        <end position="167"/>
    </location>
</feature>
<feature type="repeat" description="WD 3" evidence="1">
    <location>
        <begin position="171"/>
        <end position="211"/>
    </location>
</feature>
<feature type="repeat" description="WD 4" evidence="1">
    <location>
        <begin position="323"/>
        <end position="368"/>
    </location>
</feature>
<name>GTS1_ARATH</name>
<evidence type="ECO:0000255" key="1"/>
<evidence type="ECO:0000269" key="2">
    <source>
    </source>
</evidence>
<evidence type="ECO:0000303" key="3">
    <source>
    </source>
</evidence>
<evidence type="ECO:0000305" key="4"/>
<evidence type="ECO:0000312" key="5">
    <source>
        <dbReference type="Araport" id="AT2G47790"/>
    </source>
</evidence>
<evidence type="ECO:0000312" key="6">
    <source>
        <dbReference type="EMBL" id="AAL11563.1"/>
    </source>
</evidence>
<evidence type="ECO:0000312" key="7">
    <source>
        <dbReference type="EMBL" id="AEC10888.1"/>
    </source>
</evidence>
<accession>Q944S2</accession>
<accession>O82247</accession>
<gene>
    <name evidence="3" type="primary">GTS1</name>
    <name evidence="5" type="ordered locus">At2g47790</name>
    <name evidence="7" type="ORF">F17A22.18</name>
</gene>
<reference key="1">
    <citation type="journal article" date="1999" name="Nature">
        <title>Sequence and analysis of chromosome 2 of the plant Arabidopsis thaliana.</title>
        <authorList>
            <person name="Lin X."/>
            <person name="Kaul S."/>
            <person name="Rounsley S.D."/>
            <person name="Shea T.P."/>
            <person name="Benito M.-I."/>
            <person name="Town C.D."/>
            <person name="Fujii C.Y."/>
            <person name="Mason T.M."/>
            <person name="Bowman C.L."/>
            <person name="Barnstead M.E."/>
            <person name="Feldblyum T.V."/>
            <person name="Buell C.R."/>
            <person name="Ketchum K.A."/>
            <person name="Lee J.J."/>
            <person name="Ronning C.M."/>
            <person name="Koo H.L."/>
            <person name="Moffat K.S."/>
            <person name="Cronin L.A."/>
            <person name="Shen M."/>
            <person name="Pai G."/>
            <person name="Van Aken S."/>
            <person name="Umayam L."/>
            <person name="Tallon L.J."/>
            <person name="Gill J.E."/>
            <person name="Adams M.D."/>
            <person name="Carrera A.J."/>
            <person name="Creasy T.H."/>
            <person name="Goodman H.M."/>
            <person name="Somerville C.R."/>
            <person name="Copenhaver G.P."/>
            <person name="Preuss D."/>
            <person name="Nierman W.C."/>
            <person name="White O."/>
            <person name="Eisen J.A."/>
            <person name="Salzberg S.L."/>
            <person name="Fraser C.M."/>
            <person name="Venter J.C."/>
        </authorList>
    </citation>
    <scope>NUCLEOTIDE SEQUENCE [LARGE SCALE GENOMIC DNA]</scope>
    <source>
        <strain>cv. Columbia</strain>
    </source>
</reference>
<reference key="2">
    <citation type="journal article" date="2017" name="Plant J.">
        <title>Araport11: a complete reannotation of the Arabidopsis thaliana reference genome.</title>
        <authorList>
            <person name="Cheng C.Y."/>
            <person name="Krishnakumar V."/>
            <person name="Chan A.P."/>
            <person name="Thibaud-Nissen F."/>
            <person name="Schobel S."/>
            <person name="Town C.D."/>
        </authorList>
    </citation>
    <scope>GENOME REANNOTATION</scope>
    <source>
        <strain>cv. Columbia</strain>
    </source>
</reference>
<reference key="3">
    <citation type="journal article" date="2003" name="Science">
        <title>Empirical analysis of transcriptional activity in the Arabidopsis genome.</title>
        <authorList>
            <person name="Yamada K."/>
            <person name="Lim J."/>
            <person name="Dale J.M."/>
            <person name="Chen H."/>
            <person name="Shinn P."/>
            <person name="Palm C.J."/>
            <person name="Southwick A.M."/>
            <person name="Wu H.C."/>
            <person name="Kim C.J."/>
            <person name="Nguyen M."/>
            <person name="Pham P.K."/>
            <person name="Cheuk R.F."/>
            <person name="Karlin-Newmann G."/>
            <person name="Liu S.X."/>
            <person name="Lam B."/>
            <person name="Sakano H."/>
            <person name="Wu T."/>
            <person name="Yu G."/>
            <person name="Miranda M."/>
            <person name="Quach H.L."/>
            <person name="Tripp M."/>
            <person name="Chang C.H."/>
            <person name="Lee J.M."/>
            <person name="Toriumi M.J."/>
            <person name="Chan M.M."/>
            <person name="Tang C.C."/>
            <person name="Onodera C.S."/>
            <person name="Deng J.M."/>
            <person name="Akiyama K."/>
            <person name="Ansari Y."/>
            <person name="Arakawa T."/>
            <person name="Banh J."/>
            <person name="Banno F."/>
            <person name="Bowser L."/>
            <person name="Brooks S.Y."/>
            <person name="Carninci P."/>
            <person name="Chao Q."/>
            <person name="Choy N."/>
            <person name="Enju A."/>
            <person name="Goldsmith A.D."/>
            <person name="Gurjal M."/>
            <person name="Hansen N.F."/>
            <person name="Hayashizaki Y."/>
            <person name="Johnson-Hopson C."/>
            <person name="Hsuan V.W."/>
            <person name="Iida K."/>
            <person name="Karnes M."/>
            <person name="Khan S."/>
            <person name="Koesema E."/>
            <person name="Ishida J."/>
            <person name="Jiang P.X."/>
            <person name="Jones T."/>
            <person name="Kawai J."/>
            <person name="Kamiya A."/>
            <person name="Meyers C."/>
            <person name="Nakajima M."/>
            <person name="Narusaka M."/>
            <person name="Seki M."/>
            <person name="Sakurai T."/>
            <person name="Satou M."/>
            <person name="Tamse R."/>
            <person name="Vaysberg M."/>
            <person name="Wallender E.K."/>
            <person name="Wong C."/>
            <person name="Yamamura Y."/>
            <person name="Yuan S."/>
            <person name="Shinozaki K."/>
            <person name="Davis R.W."/>
            <person name="Theologis A."/>
            <person name="Ecker J.R."/>
        </authorList>
    </citation>
    <scope>NUCLEOTIDE SEQUENCE [LARGE SCALE MRNA]</scope>
    <source>
        <strain>cv. Columbia</strain>
    </source>
</reference>
<reference key="4">
    <citation type="journal article" date="2014" name="BMC Plant Biol.">
        <title>GIGANTUS1 (GTS1), a member of Transducin/WD40 protein superfamily, controls seed germination, growth and biomass accumulation through ribosome-biogenesis protein interactions in Arabidopsis thaliana.</title>
        <authorList>
            <person name="Gachomo E.W."/>
            <person name="Jimenez-Lopez J.C."/>
            <person name="Baptiste L.J."/>
            <person name="Kotchoni S.O."/>
        </authorList>
    </citation>
    <scope>FUNCTION</scope>
    <scope>TISSUE SPECIFICITY</scope>
    <scope>DISRUPTION PHENOTYPE</scope>
</reference>
<comment type="function">
    <text evidence="2">Involved in the control of plant growth development. Acts as negative regulator of seed germination, cell division in meristematic regions, plant growth and overall biomass accumulation. May function by regulating ribosome activities and biogenesis in plant cells.</text>
</comment>
<comment type="tissue specificity">
    <text evidence="2">Expressed in germinating seeds, rosettes leaves, flowers and siliques.</text>
</comment>
<comment type="disruption phenotype">
    <text evidence="2">Fast germination rate, fast growth rate, increased biomass accumulation and early flowering.</text>
</comment>
<sequence>MEEVSSEMEVEVQNRQLSDSSPAQNVKKFGLKNSIQTNFGSDYVFQIVPKIDWTAIAVSLSTNTVKLYSPVTGQYYGECKGHSDTVNQIAFSSDSAASPHVLHSCSSDGTIRSWDTRSFQQVSRIDTGNDQEIFSFSYGGAADNLLAGGCKEQVLLWDWRNSKQVACLEESHMDDVTQVHFVPNKPNKLLSASVDGLICLFNTEGDINDDDHLESVINVGTSIGKIGFLGDGYKKLWCLTHIETLSIWNWEDGSCEVNLEKARELASDSWTQDNVDYFVDCHCPGGEDLWVIGGTCAGTVGYFPVNYKQPGSIGTAEAILGGGHIDVVRSVLQMPGEYGGAAGLFGWTGGEDGRLCCWKSDEDATEINRSWTSSELVVKPPRNRKKNRHSPY</sequence>
<keyword id="KW-0217">Developmental protein</keyword>
<keyword id="KW-0341">Growth regulation</keyword>
<keyword id="KW-1185">Reference proteome</keyword>
<keyword id="KW-0677">Repeat</keyword>
<keyword id="KW-0853">WD repeat</keyword>
<protein>
    <recommendedName>
        <fullName evidence="4">WD repeat-containing protein GTS1</fullName>
    </recommendedName>
    <alternativeName>
        <fullName evidence="3">Protein GIGANTUS 1</fullName>
    </alternativeName>
</protein>
<organism evidence="6">
    <name type="scientific">Arabidopsis thaliana</name>
    <name type="common">Mouse-ear cress</name>
    <dbReference type="NCBI Taxonomy" id="3702"/>
    <lineage>
        <taxon>Eukaryota</taxon>
        <taxon>Viridiplantae</taxon>
        <taxon>Streptophyta</taxon>
        <taxon>Embryophyta</taxon>
        <taxon>Tracheophyta</taxon>
        <taxon>Spermatophyta</taxon>
        <taxon>Magnoliopsida</taxon>
        <taxon>eudicotyledons</taxon>
        <taxon>Gunneridae</taxon>
        <taxon>Pentapetalae</taxon>
        <taxon>rosids</taxon>
        <taxon>malvids</taxon>
        <taxon>Brassicales</taxon>
        <taxon>Brassicaceae</taxon>
        <taxon>Camelineae</taxon>
        <taxon>Arabidopsis</taxon>
    </lineage>
</organism>
<proteinExistence type="evidence at transcript level"/>